<gene>
    <name type="primary">Exoc7</name>
    <name type="synonym">Exo70</name>
</gene>
<keyword id="KW-0002">3D-structure</keyword>
<keyword id="KW-0025">Alternative splicing</keyword>
<keyword id="KW-1003">Cell membrane</keyword>
<keyword id="KW-0175">Coiled coil</keyword>
<keyword id="KW-0963">Cytoplasm</keyword>
<keyword id="KW-0268">Exocytosis</keyword>
<keyword id="KW-0472">Membrane</keyword>
<keyword id="KW-0597">Phosphoprotein</keyword>
<keyword id="KW-0653">Protein transport</keyword>
<keyword id="KW-1185">Reference proteome</keyword>
<keyword id="KW-0813">Transport</keyword>
<feature type="chain" id="PRO_0000118961" description="Exocyst complex component 7">
    <location>
        <begin position="1"/>
        <end position="697"/>
    </location>
</feature>
<feature type="region of interest" description="SEC8 and ARHQ binding">
    <location>
        <begin position="1"/>
        <end position="384"/>
    </location>
</feature>
<feature type="region of interest" description="Disordered" evidence="6">
    <location>
        <begin position="238"/>
        <end position="270"/>
    </location>
</feature>
<feature type="coiled-coil region" evidence="5">
    <location>
        <begin position="5"/>
        <end position="42"/>
    </location>
</feature>
<feature type="coiled-coil region" evidence="5">
    <location>
        <begin position="63"/>
        <end position="85"/>
    </location>
</feature>
<feature type="modified residue" description="Phosphoserine" evidence="3">
    <location>
        <position position="133"/>
    </location>
</feature>
<feature type="splice variant" id="VSP_001484" description="In isoform 2." evidence="8">
    <location>
        <begin position="270"/>
        <end position="300"/>
    </location>
</feature>
<feature type="splice variant" id="VSP_001485" description="In isoform 2." evidence="8">
    <location>
        <begin position="477"/>
        <end position="489"/>
    </location>
</feature>
<feature type="sequence conflict" description="In Ref. 1; AAB69345." evidence="9" ref="1">
    <original>R</original>
    <variation>K</variation>
    <location>
        <position position="40"/>
    </location>
</feature>
<feature type="sequence conflict" description="In Ref. 1; AAB69345." evidence="9" ref="1">
    <original>V</original>
    <variation>I</variation>
    <location>
        <position position="165"/>
    </location>
</feature>
<feature type="sequence conflict" description="In Ref. 1; AAB69345." evidence="9" ref="1">
    <original>K</original>
    <variation>E</variation>
    <location>
        <position position="433"/>
    </location>
</feature>
<feature type="sequence conflict" description="In Ref. 1; AAB69345." evidence="9" ref="1">
    <original>Y</original>
    <variation>F</variation>
    <location>
        <position position="529"/>
    </location>
</feature>
<feature type="sequence conflict" description="In Ref. 1; AAB69345." evidence="9" ref="1">
    <original>ER</original>
    <variation>DP</variation>
    <location>
        <begin position="610"/>
        <end position="611"/>
    </location>
</feature>
<feature type="helix" evidence="10">
    <location>
        <begin position="89"/>
        <end position="91"/>
    </location>
</feature>
<feature type="helix" evidence="10">
    <location>
        <begin position="93"/>
        <end position="103"/>
    </location>
</feature>
<feature type="helix" evidence="10">
    <location>
        <begin position="109"/>
        <end position="129"/>
    </location>
</feature>
<feature type="helix" evidence="10">
    <location>
        <begin position="134"/>
        <end position="161"/>
    </location>
</feature>
<feature type="helix" evidence="10">
    <location>
        <begin position="167"/>
        <end position="176"/>
    </location>
</feature>
<feature type="helix" evidence="10">
    <location>
        <begin position="193"/>
        <end position="209"/>
    </location>
</feature>
<feature type="helix" evidence="10">
    <location>
        <begin position="214"/>
        <end position="240"/>
    </location>
</feature>
<feature type="helix" evidence="10">
    <location>
        <begin position="307"/>
        <end position="334"/>
    </location>
</feature>
<feature type="helix" evidence="10">
    <location>
        <begin position="337"/>
        <end position="339"/>
    </location>
</feature>
<feature type="helix" evidence="10">
    <location>
        <begin position="340"/>
        <end position="371"/>
    </location>
</feature>
<feature type="turn" evidence="10">
    <location>
        <begin position="377"/>
        <end position="380"/>
    </location>
</feature>
<feature type="helix" evidence="10">
    <location>
        <begin position="381"/>
        <end position="398"/>
    </location>
</feature>
<feature type="turn" evidence="10">
    <location>
        <begin position="399"/>
        <end position="401"/>
    </location>
</feature>
<feature type="helix" evidence="10">
    <location>
        <begin position="404"/>
        <end position="407"/>
    </location>
</feature>
<feature type="helix" evidence="10">
    <location>
        <begin position="409"/>
        <end position="434"/>
    </location>
</feature>
<feature type="helix" evidence="10">
    <location>
        <begin position="439"/>
        <end position="441"/>
    </location>
</feature>
<feature type="helix" evidence="10">
    <location>
        <begin position="450"/>
        <end position="464"/>
    </location>
</feature>
<feature type="helix" evidence="10">
    <location>
        <begin position="466"/>
        <end position="474"/>
    </location>
</feature>
<feature type="helix" evidence="10">
    <location>
        <begin position="500"/>
        <end position="526"/>
    </location>
</feature>
<feature type="helix" evidence="10">
    <location>
        <begin position="532"/>
        <end position="547"/>
    </location>
</feature>
<feature type="turn" evidence="10">
    <location>
        <begin position="548"/>
        <end position="552"/>
    </location>
</feature>
<feature type="helix" evidence="10">
    <location>
        <begin position="555"/>
        <end position="560"/>
    </location>
</feature>
<feature type="helix" evidence="10">
    <location>
        <begin position="566"/>
        <end position="582"/>
    </location>
</feature>
<feature type="helix" evidence="10">
    <location>
        <begin position="583"/>
        <end position="585"/>
    </location>
</feature>
<feature type="helix" evidence="10">
    <location>
        <begin position="586"/>
        <end position="589"/>
    </location>
</feature>
<feature type="turn" evidence="10">
    <location>
        <begin position="590"/>
        <end position="592"/>
    </location>
</feature>
<feature type="helix" evidence="10">
    <location>
        <begin position="594"/>
        <end position="596"/>
    </location>
</feature>
<feature type="helix" evidence="10">
    <location>
        <begin position="608"/>
        <end position="632"/>
    </location>
</feature>
<feature type="helix" evidence="10">
    <location>
        <begin position="640"/>
        <end position="666"/>
    </location>
</feature>
<feature type="helix" evidence="10">
    <location>
        <begin position="674"/>
        <end position="677"/>
    </location>
</feature>
<feature type="helix" evidence="10">
    <location>
        <begin position="682"/>
        <end position="690"/>
    </location>
</feature>
<feature type="strand" evidence="10">
    <location>
        <begin position="692"/>
        <end position="694"/>
    </location>
</feature>
<accession>O35250</accession>
<accession>Q8K121</accession>
<organism>
    <name type="scientific">Mus musculus</name>
    <name type="common">Mouse</name>
    <dbReference type="NCBI Taxonomy" id="10090"/>
    <lineage>
        <taxon>Eukaryota</taxon>
        <taxon>Metazoa</taxon>
        <taxon>Chordata</taxon>
        <taxon>Craniata</taxon>
        <taxon>Vertebrata</taxon>
        <taxon>Euteleostomi</taxon>
        <taxon>Mammalia</taxon>
        <taxon>Eutheria</taxon>
        <taxon>Euarchontoglires</taxon>
        <taxon>Glires</taxon>
        <taxon>Rodentia</taxon>
        <taxon>Myomorpha</taxon>
        <taxon>Muroidea</taxon>
        <taxon>Muridae</taxon>
        <taxon>Murinae</taxon>
        <taxon>Mus</taxon>
        <taxon>Mus</taxon>
    </lineage>
</organism>
<name>EXOC7_MOUSE</name>
<protein>
    <recommendedName>
        <fullName>Exocyst complex component 7</fullName>
    </recommendedName>
    <alternativeName>
        <fullName>Exocyst complex component Exo70</fullName>
    </alternativeName>
</protein>
<dbReference type="EMBL" id="AF014461">
    <property type="protein sequence ID" value="AAB69345.1"/>
    <property type="molecule type" value="mRNA"/>
</dbReference>
<dbReference type="EMBL" id="BC028927">
    <property type="protein sequence ID" value="AAH28927.1"/>
    <property type="molecule type" value="mRNA"/>
</dbReference>
<dbReference type="CCDS" id="CCDS25664.1">
    <molecule id="O35250-1"/>
</dbReference>
<dbReference type="CCDS" id="CCDS48983.1">
    <molecule id="O35250-2"/>
</dbReference>
<dbReference type="PIR" id="T03722">
    <property type="entry name" value="T03722"/>
</dbReference>
<dbReference type="RefSeq" id="NP_001156344.1">
    <molecule id="O35250-2"/>
    <property type="nucleotide sequence ID" value="NM_001162872.3"/>
</dbReference>
<dbReference type="RefSeq" id="NP_058553.2">
    <molecule id="O35250-1"/>
    <property type="nucleotide sequence ID" value="NM_016857.4"/>
</dbReference>
<dbReference type="PDB" id="2PFT">
    <property type="method" value="X-ray"/>
    <property type="resolution" value="2.25 A"/>
    <property type="chains" value="A=85-697"/>
</dbReference>
<dbReference type="PDBsum" id="2PFT"/>
<dbReference type="SMR" id="O35250"/>
<dbReference type="BioGRID" id="207307">
    <property type="interactions" value="3"/>
</dbReference>
<dbReference type="ComplexPortal" id="CPX-4982">
    <property type="entry name" value="Exocyst, Exoc6 variant"/>
</dbReference>
<dbReference type="ComplexPortal" id="CPX-4983">
    <property type="entry name" value="Exocyst, Exoc6b variant"/>
</dbReference>
<dbReference type="FunCoup" id="O35250">
    <property type="interactions" value="2462"/>
</dbReference>
<dbReference type="IntAct" id="O35250">
    <property type="interactions" value="8"/>
</dbReference>
<dbReference type="MINT" id="O35250"/>
<dbReference type="STRING" id="10090.ENSMUSP00000021147"/>
<dbReference type="GlyGen" id="O35250">
    <property type="glycosylation" value="1 site"/>
</dbReference>
<dbReference type="iPTMnet" id="O35250"/>
<dbReference type="PhosphoSitePlus" id="O35250"/>
<dbReference type="SwissPalm" id="O35250"/>
<dbReference type="jPOST" id="O35250"/>
<dbReference type="PaxDb" id="10090-ENSMUSP00000021147"/>
<dbReference type="PeptideAtlas" id="O35250"/>
<dbReference type="ProteomicsDB" id="275703">
    <molecule id="O35250-1"/>
</dbReference>
<dbReference type="ProteomicsDB" id="275704">
    <molecule id="O35250-2"/>
</dbReference>
<dbReference type="Pumba" id="O35250"/>
<dbReference type="Antibodypedia" id="19667">
    <property type="antibodies" value="194 antibodies from 33 providers"/>
</dbReference>
<dbReference type="DNASU" id="53413"/>
<dbReference type="Ensembl" id="ENSMUST00000021147.14">
    <molecule id="O35250-1"/>
    <property type="protein sequence ID" value="ENSMUSP00000021147.8"/>
    <property type="gene ID" value="ENSMUSG00000020792.16"/>
</dbReference>
<dbReference type="Ensembl" id="ENSMUST00000106411.10">
    <molecule id="O35250-2"/>
    <property type="protein sequence ID" value="ENSMUSP00000102019.4"/>
    <property type="gene ID" value="ENSMUSG00000020792.16"/>
</dbReference>
<dbReference type="GeneID" id="53413"/>
<dbReference type="KEGG" id="mmu:53413"/>
<dbReference type="UCSC" id="uc007mks.2">
    <molecule id="O35250-1"/>
    <property type="organism name" value="mouse"/>
</dbReference>
<dbReference type="AGR" id="MGI:1859270"/>
<dbReference type="CTD" id="23265"/>
<dbReference type="MGI" id="MGI:1859270">
    <property type="gene designation" value="Exoc7"/>
</dbReference>
<dbReference type="VEuPathDB" id="HostDB:ENSMUSG00000020792"/>
<dbReference type="eggNOG" id="KOG2344">
    <property type="taxonomic scope" value="Eukaryota"/>
</dbReference>
<dbReference type="GeneTree" id="ENSGT00390000003595"/>
<dbReference type="HOGENOM" id="CLU_010236_4_0_1"/>
<dbReference type="InParanoid" id="O35250"/>
<dbReference type="OMA" id="GIIRAGP"/>
<dbReference type="OrthoDB" id="1922221at2759"/>
<dbReference type="PhylomeDB" id="O35250"/>
<dbReference type="TreeFam" id="TF324243"/>
<dbReference type="Reactome" id="R-MMU-264876">
    <property type="pathway name" value="Insulin processing"/>
</dbReference>
<dbReference type="Reactome" id="R-MMU-5620916">
    <property type="pathway name" value="VxPx cargo-targeting to cilium"/>
</dbReference>
<dbReference type="BioGRID-ORCS" id="53413">
    <property type="hits" value="14 hits in 81 CRISPR screens"/>
</dbReference>
<dbReference type="CD-CODE" id="CE726F99">
    <property type="entry name" value="Postsynaptic density"/>
</dbReference>
<dbReference type="ChiTaRS" id="Exoc7">
    <property type="organism name" value="mouse"/>
</dbReference>
<dbReference type="EvolutionaryTrace" id="O35250"/>
<dbReference type="PRO" id="PR:O35250"/>
<dbReference type="Proteomes" id="UP000000589">
    <property type="component" value="Chromosome 11"/>
</dbReference>
<dbReference type="RNAct" id="O35250">
    <property type="molecule type" value="protein"/>
</dbReference>
<dbReference type="Bgee" id="ENSMUSG00000020792">
    <property type="expression patterns" value="Expressed in embryonic brain and 273 other cell types or tissues"/>
</dbReference>
<dbReference type="ExpressionAtlas" id="O35250">
    <property type="expression patterns" value="baseline and differential"/>
</dbReference>
<dbReference type="GO" id="GO:0034451">
    <property type="term" value="C:centriolar satellite"/>
    <property type="evidence" value="ECO:0007669"/>
    <property type="project" value="Ensembl"/>
</dbReference>
<dbReference type="GO" id="GO:0005829">
    <property type="term" value="C:cytosol"/>
    <property type="evidence" value="ECO:0007669"/>
    <property type="project" value="UniProtKB-SubCell"/>
</dbReference>
<dbReference type="GO" id="GO:0000145">
    <property type="term" value="C:exocyst"/>
    <property type="evidence" value="ECO:0000303"/>
    <property type="project" value="ComplexPortal"/>
</dbReference>
<dbReference type="GO" id="GO:0090543">
    <property type="term" value="C:Flemming body"/>
    <property type="evidence" value="ECO:0007669"/>
    <property type="project" value="UniProtKB-SubCell"/>
</dbReference>
<dbReference type="GO" id="GO:0032584">
    <property type="term" value="C:growth cone membrane"/>
    <property type="evidence" value="ECO:0000314"/>
    <property type="project" value="MGI"/>
</dbReference>
<dbReference type="GO" id="GO:0005886">
    <property type="term" value="C:plasma membrane"/>
    <property type="evidence" value="ECO:0000304"/>
    <property type="project" value="Reactome"/>
</dbReference>
<dbReference type="GO" id="GO:0005546">
    <property type="term" value="F:phosphatidylinositol-4,5-bisphosphate binding"/>
    <property type="evidence" value="ECO:0007669"/>
    <property type="project" value="InterPro"/>
</dbReference>
<dbReference type="GO" id="GO:0030674">
    <property type="term" value="F:protein-macromolecule adaptor activity"/>
    <property type="evidence" value="ECO:0007669"/>
    <property type="project" value="Ensembl"/>
</dbReference>
<dbReference type="GO" id="GO:0090148">
    <property type="term" value="P:membrane fission"/>
    <property type="evidence" value="ECO:0000303"/>
    <property type="project" value="ComplexPortal"/>
</dbReference>
<dbReference type="GO" id="GO:0000281">
    <property type="term" value="P:mitotic cytokinesis"/>
    <property type="evidence" value="ECO:0000303"/>
    <property type="project" value="ComplexPortal"/>
</dbReference>
<dbReference type="GO" id="GO:1903438">
    <property type="term" value="P:positive regulation of mitotic cytokinetic process"/>
    <property type="evidence" value="ECO:0007669"/>
    <property type="project" value="Ensembl"/>
</dbReference>
<dbReference type="GO" id="GO:0071806">
    <property type="term" value="P:protein transmembrane transport"/>
    <property type="evidence" value="ECO:0000315"/>
    <property type="project" value="MGI"/>
</dbReference>
<dbReference type="GO" id="GO:2000535">
    <property type="term" value="P:regulation of entry of bacterium into host cell"/>
    <property type="evidence" value="ECO:0007669"/>
    <property type="project" value="Ensembl"/>
</dbReference>
<dbReference type="GO" id="GO:0006904">
    <property type="term" value="P:vesicle docking involved in exocytosis"/>
    <property type="evidence" value="ECO:0000303"/>
    <property type="project" value="ComplexPortal"/>
</dbReference>
<dbReference type="GO" id="GO:0090522">
    <property type="term" value="P:vesicle tethering involved in exocytosis"/>
    <property type="evidence" value="ECO:0000303"/>
    <property type="project" value="ComplexPortal"/>
</dbReference>
<dbReference type="FunFam" id="1.20.1280.170:FF:000001">
    <property type="entry name" value="Exocyst complex component 7"/>
    <property type="match status" value="1"/>
</dbReference>
<dbReference type="FunFam" id="1.20.1280.170:FF:000002">
    <property type="entry name" value="Exocyst complex component 7"/>
    <property type="match status" value="1"/>
</dbReference>
<dbReference type="Gene3D" id="1.20.1280.170">
    <property type="entry name" value="Exocyst complex component Exo70"/>
    <property type="match status" value="2"/>
</dbReference>
<dbReference type="InterPro" id="IPR016159">
    <property type="entry name" value="Cullin_repeat-like_dom_sf"/>
</dbReference>
<dbReference type="InterPro" id="IPR004140">
    <property type="entry name" value="Exo70"/>
</dbReference>
<dbReference type="InterPro" id="IPR046364">
    <property type="entry name" value="Exo70_C"/>
</dbReference>
<dbReference type="PANTHER" id="PTHR12542:SF41">
    <property type="entry name" value="EXOCYST COMPLEX COMPONENT 7"/>
    <property type="match status" value="1"/>
</dbReference>
<dbReference type="PANTHER" id="PTHR12542">
    <property type="entry name" value="EXOCYST COMPLEX PROTEIN EXO70"/>
    <property type="match status" value="1"/>
</dbReference>
<dbReference type="Pfam" id="PF03081">
    <property type="entry name" value="Exo70_C"/>
    <property type="match status" value="1"/>
</dbReference>
<dbReference type="Pfam" id="PF20669">
    <property type="entry name" value="Exo70_N"/>
    <property type="match status" value="1"/>
</dbReference>
<dbReference type="SUPFAM" id="SSF74788">
    <property type="entry name" value="Cullin repeat-like"/>
    <property type="match status" value="1"/>
</dbReference>
<proteinExistence type="evidence at protein level"/>
<sequence>MIPPQEASARRREIEDKLKQEEETLSFIRDSLEKSDQLTRNMVSILSSFESRLMKLENSIIPVHKQTENLQRLQENVEKTLSCLDHVISYYHVASDTEKIIREGPTGRLEEYLGSMAKIQKAVEYFQDNSPDSPELNKVKLLFERGKESLESEFRSLMTRHSKVVSPVLLLDLISADDELEVQEDVVLEHLPESVLRDVVRISRWLVEYGRNQDFMNVYYQIRSSQLDRSIKGLKEHFRKSSSSSGVPYSPAIPNKRKDTPTKKPIKRPGTIRKAQNLLKQYSQHGLDGKKGGSNLIPLEGRDDMLDVETDAYIHCVSAFVKLAQSEYRLLMEIIPEHHQKKTFDSLIQDALDGLMLEGENIVSAARKAIIRHDFSTVLTVFPILRHLKQTKPEFDQVLQGTAASTKNKLPGLITSMETIGAKALEDFADNIKNDPDKEYNMPKDGTVHELTSNAILFLQQLLDFQETAGAMLASQVLGDTYNIPLDPRETSSSATSYSSEFSKRLLSTYICKVLGNLQLNLLSKSKVYEDPALSAIFLHNNYNYILKSLEKSELIQLVAVTQKTAERSYREHIEQQIQTYQRSWLKVTDYIAEKNLPVFQPGVKLRDKERQMIKERFKGFNDGLEELCKIQKVWAIPDTEQRDKIRQAQKDIVKETYGAFLHRYGSVPFTKNPEKYIKYRVEQVGDMIDRLFDTSA</sequence>
<evidence type="ECO:0000250" key="1"/>
<evidence type="ECO:0000250" key="2">
    <source>
        <dbReference type="UniProtKB" id="E7FC72"/>
    </source>
</evidence>
<evidence type="ECO:0000250" key="3">
    <source>
        <dbReference type="UniProtKB" id="O54922"/>
    </source>
</evidence>
<evidence type="ECO:0000250" key="4">
    <source>
        <dbReference type="UniProtKB" id="Q9UPT5"/>
    </source>
</evidence>
<evidence type="ECO:0000255" key="5"/>
<evidence type="ECO:0000256" key="6">
    <source>
        <dbReference type="SAM" id="MobiDB-lite"/>
    </source>
</evidence>
<evidence type="ECO:0000269" key="7">
    <source>
    </source>
</evidence>
<evidence type="ECO:0000303" key="8">
    <source>
    </source>
</evidence>
<evidence type="ECO:0000305" key="9"/>
<evidence type="ECO:0007829" key="10">
    <source>
        <dbReference type="PDB" id="2PFT"/>
    </source>
</evidence>
<comment type="function">
    <text evidence="2 7">Component of the exocyst complex involved in the docking of exocytic vesicles with fusion sites on the plasma membrane. In adipocytes, plays a crucial role in targeting SLC2A4 vesicle to the plasma membrane in response to insulin, perhaps directing the vesicle to the precise site of fusion. It is required for neuron survival and plays an essential role in cortical development (By similarity).</text>
</comment>
<comment type="subunit">
    <text evidence="1 7">The exocyst complex is composed of EXOC1, EXOC2, EXOC3, EXOC4, EXOC5, EXOC6, EXOC7 and EXOC8. Interacts with RAB11FIP3 (By similarity). Interacts with ARHQ in a GTP-dependent manner.</text>
</comment>
<comment type="interaction">
    <interactant intactId="EBI-775332">
        <id>O35250</id>
    </interactant>
    <interactant intactId="EBI-772648">
        <id>O35382</id>
        <label>Exoc4</label>
    </interactant>
    <organismsDiffer>false</organismsDiffer>
    <experiments>2</experiments>
</comment>
<comment type="subcellular location">
    <subcellularLocation>
        <location evidence="7">Cytoplasm</location>
        <location evidence="7">Cytosol</location>
    </subcellularLocation>
    <subcellularLocation>
        <location evidence="7">Cell membrane</location>
        <topology>Peripheral membrane protein</topology>
    </subcellularLocation>
    <subcellularLocation>
        <location evidence="4">Midbody</location>
        <location evidence="4">Midbody ring</location>
    </subcellularLocation>
    <text evidence="4 7">Translocates, as a preformed complex with SEC6 and SEC8, to the plasma membrane in response to insulin through the activation of ARHQ (PubMed:12687004). Colocalizes with CNTRL/centriolin at the midbody ring (By similarity).</text>
</comment>
<comment type="alternative products">
    <event type="alternative splicing"/>
    <isoform>
        <id>O35250-1</id>
        <name>1</name>
        <sequence type="displayed"/>
    </isoform>
    <isoform>
        <id>O35250-2</id>
        <name>2</name>
        <sequence type="described" ref="VSP_001484 VSP_001485"/>
    </isoform>
</comment>
<comment type="domain">
    <text>The C-terminus is required for translocation to the plasma membrane.</text>
</comment>
<comment type="similarity">
    <text evidence="9">Belongs to the EXO70 family.</text>
</comment>
<reference key="1">
    <citation type="submission" date="1997-07" db="EMBL/GenBank/DDBJ databases">
        <authorList>
            <person name="Guo W."/>
            <person name="Roth D."/>
            <person name="De Camilli P."/>
            <person name="Novick P."/>
        </authorList>
    </citation>
    <scope>NUCLEOTIDE SEQUENCE [MRNA] (ISOFORM 1)</scope>
    <source>
        <tissue>Brain</tissue>
    </source>
</reference>
<reference key="2">
    <citation type="journal article" date="2004" name="Genome Res.">
        <title>The status, quality, and expansion of the NIH full-length cDNA project: the Mammalian Gene Collection (MGC).</title>
        <authorList>
            <consortium name="The MGC Project Team"/>
        </authorList>
    </citation>
    <scope>NUCLEOTIDE SEQUENCE [LARGE SCALE MRNA] (ISOFORM 2)</scope>
    <source>
        <strain>FVB/N</strain>
        <tissue>Colon</tissue>
    </source>
</reference>
<reference key="3">
    <citation type="journal article" date="2003" name="Nature">
        <title>The exocyst complex is required for targeting of Glut4 to the plasma membrane by insulin.</title>
        <authorList>
            <person name="Inoue M."/>
            <person name="Chang L."/>
            <person name="Hwang J."/>
            <person name="Chiang S.-H."/>
            <person name="Saltiel A.R."/>
        </authorList>
    </citation>
    <scope>FUNCTION</scope>
    <scope>INTERACTION WITH ARHQ</scope>
    <scope>SUBCELLULAR LOCATION</scope>
</reference>
<reference key="4">
    <citation type="journal article" date="2010" name="Cell">
        <title>A tissue-specific atlas of mouse protein phosphorylation and expression.</title>
        <authorList>
            <person name="Huttlin E.L."/>
            <person name="Jedrychowski M.P."/>
            <person name="Elias J.E."/>
            <person name="Goswami T."/>
            <person name="Rad R."/>
            <person name="Beausoleil S.A."/>
            <person name="Villen J."/>
            <person name="Haas W."/>
            <person name="Sowa M.E."/>
            <person name="Gygi S.P."/>
        </authorList>
    </citation>
    <scope>IDENTIFICATION BY MASS SPECTROMETRY [LARGE SCALE ANALYSIS]</scope>
    <source>
        <tissue>Brain</tissue>
        <tissue>Heart</tissue>
        <tissue>Kidney</tissue>
        <tissue>Liver</tissue>
        <tissue>Lung</tissue>
        <tissue>Spleen</tissue>
        <tissue>Testis</tissue>
    </source>
</reference>